<dbReference type="EC" id="3.1.3.16" evidence="1"/>
<dbReference type="EC" id="3.1.3.48" evidence="6"/>
<dbReference type="EMBL" id="X68277">
    <property type="protein sequence ID" value="CAA48338.1"/>
    <property type="molecule type" value="mRNA"/>
</dbReference>
<dbReference type="EMBL" id="DQ301957">
    <property type="protein sequence ID" value="ABB96250.1"/>
    <property type="molecule type" value="Genomic_DNA"/>
</dbReference>
<dbReference type="EMBL" id="CH471062">
    <property type="protein sequence ID" value="EAW61425.1"/>
    <property type="molecule type" value="Genomic_DNA"/>
</dbReference>
<dbReference type="EMBL" id="CH471062">
    <property type="protein sequence ID" value="EAW61426.1"/>
    <property type="molecule type" value="Genomic_DNA"/>
</dbReference>
<dbReference type="EMBL" id="BC022463">
    <property type="protein sequence ID" value="AAH22463.1"/>
    <property type="molecule type" value="mRNA"/>
</dbReference>
<dbReference type="CCDS" id="CCDS4380.1"/>
<dbReference type="PIR" id="S29090">
    <property type="entry name" value="S29090"/>
</dbReference>
<dbReference type="RefSeq" id="NP_004408.1">
    <property type="nucleotide sequence ID" value="NM_004417.4"/>
</dbReference>
<dbReference type="PDB" id="6APX">
    <property type="method" value="X-ray"/>
    <property type="resolution" value="2.49 A"/>
    <property type="chains" value="A=172-314"/>
</dbReference>
<dbReference type="PDB" id="6D65">
    <property type="method" value="X-ray"/>
    <property type="resolution" value="2.35 A"/>
    <property type="chains" value="A/C=172-314"/>
</dbReference>
<dbReference type="PDB" id="6D66">
    <property type="method" value="X-ray"/>
    <property type="resolution" value="2.23 A"/>
    <property type="chains" value="A=172-314"/>
</dbReference>
<dbReference type="PDB" id="6D67">
    <property type="method" value="X-ray"/>
    <property type="resolution" value="2.55 A"/>
    <property type="chains" value="A=172-314"/>
</dbReference>
<dbReference type="PDBsum" id="6APX"/>
<dbReference type="PDBsum" id="6D65"/>
<dbReference type="PDBsum" id="6D66"/>
<dbReference type="PDBsum" id="6D67"/>
<dbReference type="SMR" id="P28562"/>
<dbReference type="BioGRID" id="108176">
    <property type="interactions" value="97"/>
</dbReference>
<dbReference type="FunCoup" id="P28562">
    <property type="interactions" value="1761"/>
</dbReference>
<dbReference type="IntAct" id="P28562">
    <property type="interactions" value="61"/>
</dbReference>
<dbReference type="MINT" id="P28562"/>
<dbReference type="STRING" id="9606.ENSP00000239223"/>
<dbReference type="BindingDB" id="P28562"/>
<dbReference type="ChEMBL" id="CHEMBL6026"/>
<dbReference type="DrugBank" id="DB02169">
    <property type="generic name" value="9,10-Deepithio-9,10-Didehydroacanthifolicin"/>
</dbReference>
<dbReference type="DEPOD" id="DUSP1"/>
<dbReference type="iPTMnet" id="P28562"/>
<dbReference type="PhosphoSitePlus" id="P28562"/>
<dbReference type="BioMuta" id="DUSP1"/>
<dbReference type="DMDM" id="1346900"/>
<dbReference type="CPTAC" id="CPTAC-1758"/>
<dbReference type="MassIVE" id="P28562"/>
<dbReference type="PaxDb" id="9606-ENSP00000239223"/>
<dbReference type="PeptideAtlas" id="P28562"/>
<dbReference type="ProteomicsDB" id="54489"/>
<dbReference type="Antibodypedia" id="4343">
    <property type="antibodies" value="573 antibodies from 38 providers"/>
</dbReference>
<dbReference type="DNASU" id="1843"/>
<dbReference type="Ensembl" id="ENST00000239223.4">
    <property type="protein sequence ID" value="ENSP00000239223.3"/>
    <property type="gene ID" value="ENSG00000120129.6"/>
</dbReference>
<dbReference type="GeneID" id="1843"/>
<dbReference type="KEGG" id="hsa:1843"/>
<dbReference type="MANE-Select" id="ENST00000239223.4">
    <property type="protein sequence ID" value="ENSP00000239223.3"/>
    <property type="RefSeq nucleotide sequence ID" value="NM_004417.4"/>
    <property type="RefSeq protein sequence ID" value="NP_004408.1"/>
</dbReference>
<dbReference type="UCSC" id="uc003mbv.3">
    <property type="organism name" value="human"/>
</dbReference>
<dbReference type="AGR" id="HGNC:3064"/>
<dbReference type="CTD" id="1843"/>
<dbReference type="DisGeNET" id="1843"/>
<dbReference type="GeneCards" id="DUSP1"/>
<dbReference type="HGNC" id="HGNC:3064">
    <property type="gene designation" value="DUSP1"/>
</dbReference>
<dbReference type="HPA" id="ENSG00000120129">
    <property type="expression patterns" value="Low tissue specificity"/>
</dbReference>
<dbReference type="MIM" id="600714">
    <property type="type" value="gene"/>
</dbReference>
<dbReference type="neXtProt" id="NX_P28562"/>
<dbReference type="OpenTargets" id="ENSG00000120129"/>
<dbReference type="PharmGKB" id="PA27519"/>
<dbReference type="VEuPathDB" id="HostDB:ENSG00000120129"/>
<dbReference type="eggNOG" id="KOG1716">
    <property type="taxonomic scope" value="Eukaryota"/>
</dbReference>
<dbReference type="GeneTree" id="ENSGT00940000159044"/>
<dbReference type="HOGENOM" id="CLU_027074_0_2_1"/>
<dbReference type="InParanoid" id="P28562"/>
<dbReference type="OMA" id="MVNMQVC"/>
<dbReference type="OrthoDB" id="165342at2759"/>
<dbReference type="PAN-GO" id="P28562">
    <property type="GO annotations" value="6 GO annotations based on evolutionary models"/>
</dbReference>
<dbReference type="PhylomeDB" id="P28562"/>
<dbReference type="TreeFam" id="TF105122"/>
<dbReference type="BRENDA" id="3.1.3.16">
    <property type="organism ID" value="2681"/>
</dbReference>
<dbReference type="PathwayCommons" id="P28562"/>
<dbReference type="Reactome" id="R-HSA-112409">
    <property type="pathway name" value="RAF-independent MAPK1/3 activation"/>
</dbReference>
<dbReference type="Reactome" id="R-HSA-5675221">
    <property type="pathway name" value="Negative regulation of MAPK pathway"/>
</dbReference>
<dbReference type="SABIO-RK" id="P28562"/>
<dbReference type="SignaLink" id="P28562"/>
<dbReference type="SIGNOR" id="P28562"/>
<dbReference type="BioGRID-ORCS" id="1843">
    <property type="hits" value="25 hits in 1174 CRISPR screens"/>
</dbReference>
<dbReference type="ChiTaRS" id="DUSP1">
    <property type="organism name" value="human"/>
</dbReference>
<dbReference type="GeneWiki" id="DUSP1"/>
<dbReference type="GenomeRNAi" id="1843"/>
<dbReference type="Pharos" id="P28562">
    <property type="development level" value="Tchem"/>
</dbReference>
<dbReference type="PRO" id="PR:P28562"/>
<dbReference type="Proteomes" id="UP000005640">
    <property type="component" value="Chromosome 5"/>
</dbReference>
<dbReference type="RNAct" id="P28562">
    <property type="molecule type" value="protein"/>
</dbReference>
<dbReference type="Bgee" id="ENSG00000120129">
    <property type="expression patterns" value="Expressed in vena cava and 208 other cell types or tissues"/>
</dbReference>
<dbReference type="GO" id="GO:0005737">
    <property type="term" value="C:cytoplasm"/>
    <property type="evidence" value="ECO:0000314"/>
    <property type="project" value="UniProtKB"/>
</dbReference>
<dbReference type="GO" id="GO:0005634">
    <property type="term" value="C:nucleus"/>
    <property type="evidence" value="ECO:0000314"/>
    <property type="project" value="UniProtKB"/>
</dbReference>
<dbReference type="GO" id="GO:0019838">
    <property type="term" value="F:growth factor binding"/>
    <property type="evidence" value="ECO:0007669"/>
    <property type="project" value="Ensembl"/>
</dbReference>
<dbReference type="GO" id="GO:0017017">
    <property type="term" value="F:MAP kinase tyrosine/serine/threonine phosphatase activity"/>
    <property type="evidence" value="ECO:0000250"/>
    <property type="project" value="UniProtKB"/>
</dbReference>
<dbReference type="GO" id="GO:0051019">
    <property type="term" value="F:mitogen-activated protein kinase binding"/>
    <property type="evidence" value="ECO:0000250"/>
    <property type="project" value="UniProtKB"/>
</dbReference>
<dbReference type="GO" id="GO:0004721">
    <property type="term" value="F:phosphoprotein phosphatase activity"/>
    <property type="evidence" value="ECO:0000318"/>
    <property type="project" value="GO_Central"/>
</dbReference>
<dbReference type="GO" id="GO:0004722">
    <property type="term" value="F:protein serine/threonine phosphatase activity"/>
    <property type="evidence" value="ECO:0000250"/>
    <property type="project" value="UniProtKB"/>
</dbReference>
<dbReference type="GO" id="GO:0004725">
    <property type="term" value="F:protein tyrosine phosphatase activity"/>
    <property type="evidence" value="ECO:0000314"/>
    <property type="project" value="UniProtKB"/>
</dbReference>
<dbReference type="GO" id="GO:0008138">
    <property type="term" value="F:protein tyrosine/serine/threonine phosphatase activity"/>
    <property type="evidence" value="ECO:0000314"/>
    <property type="project" value="UniProtKB"/>
</dbReference>
<dbReference type="GO" id="GO:1990869">
    <property type="term" value="P:cellular response to chemokine"/>
    <property type="evidence" value="ECO:0000315"/>
    <property type="project" value="BHF-UCL"/>
</dbReference>
<dbReference type="GO" id="GO:0032870">
    <property type="term" value="P:cellular response to hormone stimulus"/>
    <property type="evidence" value="ECO:0007669"/>
    <property type="project" value="Ensembl"/>
</dbReference>
<dbReference type="GO" id="GO:0001706">
    <property type="term" value="P:endoderm formation"/>
    <property type="evidence" value="ECO:0000318"/>
    <property type="project" value="GO_Central"/>
</dbReference>
<dbReference type="GO" id="GO:0035556">
    <property type="term" value="P:intracellular signal transduction"/>
    <property type="evidence" value="ECO:0007669"/>
    <property type="project" value="Ensembl"/>
</dbReference>
<dbReference type="GO" id="GO:0043066">
    <property type="term" value="P:negative regulation of apoptotic process"/>
    <property type="evidence" value="ECO:0007669"/>
    <property type="project" value="Ensembl"/>
</dbReference>
<dbReference type="GO" id="GO:0007162">
    <property type="term" value="P:negative regulation of cell adhesion"/>
    <property type="evidence" value="ECO:0000315"/>
    <property type="project" value="BHF-UCL"/>
</dbReference>
<dbReference type="GO" id="GO:0008285">
    <property type="term" value="P:negative regulation of cell population proliferation"/>
    <property type="evidence" value="ECO:0007669"/>
    <property type="project" value="Ensembl"/>
</dbReference>
<dbReference type="GO" id="GO:2000279">
    <property type="term" value="P:negative regulation of DNA biosynthetic process"/>
    <property type="evidence" value="ECO:0007669"/>
    <property type="project" value="Ensembl"/>
</dbReference>
<dbReference type="GO" id="GO:0070373">
    <property type="term" value="P:negative regulation of ERK1 and ERK2 cascade"/>
    <property type="evidence" value="ECO:0007669"/>
    <property type="project" value="Ensembl"/>
</dbReference>
<dbReference type="GO" id="GO:0043407">
    <property type="term" value="P:negative regulation of MAP kinase activity"/>
    <property type="evidence" value="ECO:0000314"/>
    <property type="project" value="UniProtKB"/>
</dbReference>
<dbReference type="GO" id="GO:0043409">
    <property type="term" value="P:negative regulation of MAPK cascade"/>
    <property type="evidence" value="ECO:0000250"/>
    <property type="project" value="UniProtKB"/>
</dbReference>
<dbReference type="GO" id="GO:0051447">
    <property type="term" value="P:negative regulation of meiotic cell cycle"/>
    <property type="evidence" value="ECO:0000250"/>
    <property type="project" value="UniProtKB"/>
</dbReference>
<dbReference type="GO" id="GO:0090027">
    <property type="term" value="P:negative regulation of monocyte chemotaxis"/>
    <property type="evidence" value="ECO:0000315"/>
    <property type="project" value="BHF-UCL"/>
</dbReference>
<dbReference type="GO" id="GO:1903753">
    <property type="term" value="P:negative regulation of p38MAPK cascade"/>
    <property type="evidence" value="ECO:0000315"/>
    <property type="project" value="BHF-UCL"/>
</dbReference>
<dbReference type="GO" id="GO:0070262">
    <property type="term" value="P:peptidyl-serine dephosphorylation"/>
    <property type="evidence" value="ECO:0000250"/>
    <property type="project" value="UniProtKB"/>
</dbReference>
<dbReference type="GO" id="GO:0035970">
    <property type="term" value="P:peptidyl-threonine dephosphorylation"/>
    <property type="evidence" value="ECO:0000250"/>
    <property type="project" value="UniProtKB"/>
</dbReference>
<dbReference type="GO" id="GO:0035335">
    <property type="term" value="P:peptidyl-tyrosine dephosphorylation"/>
    <property type="evidence" value="ECO:0000314"/>
    <property type="project" value="UniProtKB"/>
</dbReference>
<dbReference type="GO" id="GO:0043065">
    <property type="term" value="P:positive regulation of apoptotic process"/>
    <property type="evidence" value="ECO:0007669"/>
    <property type="project" value="Ensembl"/>
</dbReference>
<dbReference type="GO" id="GO:0090266">
    <property type="term" value="P:regulation of mitotic cell cycle spindle assembly checkpoint"/>
    <property type="evidence" value="ECO:0000250"/>
    <property type="project" value="UniProtKB"/>
</dbReference>
<dbReference type="GO" id="GO:0051592">
    <property type="term" value="P:response to calcium ion"/>
    <property type="evidence" value="ECO:0007669"/>
    <property type="project" value="Ensembl"/>
</dbReference>
<dbReference type="GO" id="GO:0051591">
    <property type="term" value="P:response to cAMP"/>
    <property type="evidence" value="ECO:0007669"/>
    <property type="project" value="Ensembl"/>
</dbReference>
<dbReference type="GO" id="GO:0032355">
    <property type="term" value="P:response to estradiol"/>
    <property type="evidence" value="ECO:0007669"/>
    <property type="project" value="Ensembl"/>
</dbReference>
<dbReference type="GO" id="GO:0051384">
    <property type="term" value="P:response to glucocorticoid"/>
    <property type="evidence" value="ECO:0007669"/>
    <property type="project" value="Ensembl"/>
</dbReference>
<dbReference type="GO" id="GO:0042542">
    <property type="term" value="P:response to hydrogen peroxide"/>
    <property type="evidence" value="ECO:0007669"/>
    <property type="project" value="Ensembl"/>
</dbReference>
<dbReference type="GO" id="GO:0009416">
    <property type="term" value="P:response to light stimulus"/>
    <property type="evidence" value="ECO:0007669"/>
    <property type="project" value="Ensembl"/>
</dbReference>
<dbReference type="GO" id="GO:0032526">
    <property type="term" value="P:response to retinoic acid"/>
    <property type="evidence" value="ECO:0007669"/>
    <property type="project" value="Ensembl"/>
</dbReference>
<dbReference type="GO" id="GO:0033574">
    <property type="term" value="P:response to testosterone"/>
    <property type="evidence" value="ECO:0007669"/>
    <property type="project" value="Ensembl"/>
</dbReference>
<dbReference type="GO" id="GO:0007165">
    <property type="term" value="P:signal transduction"/>
    <property type="evidence" value="ECO:0000318"/>
    <property type="project" value="GO_Central"/>
</dbReference>
<dbReference type="CDD" id="cd14638">
    <property type="entry name" value="DSP_DUSP1"/>
    <property type="match status" value="1"/>
</dbReference>
<dbReference type="CDD" id="cd01446">
    <property type="entry name" value="DSP_MapKP"/>
    <property type="match status" value="1"/>
</dbReference>
<dbReference type="FunFam" id="3.90.190.10:FF:000015">
    <property type="entry name" value="Dual specificity phosphatase 4"/>
    <property type="match status" value="1"/>
</dbReference>
<dbReference type="FunFam" id="3.40.250.10:FF:000026">
    <property type="entry name" value="Dual specificity protein phosphatase"/>
    <property type="match status" value="1"/>
</dbReference>
<dbReference type="Gene3D" id="3.90.190.10">
    <property type="entry name" value="Protein tyrosine phosphatase superfamily"/>
    <property type="match status" value="1"/>
</dbReference>
<dbReference type="Gene3D" id="3.40.250.10">
    <property type="entry name" value="Rhodanese-like domain"/>
    <property type="match status" value="1"/>
</dbReference>
<dbReference type="InterPro" id="IPR000340">
    <property type="entry name" value="Dual-sp_phosphatase_cat-dom"/>
</dbReference>
<dbReference type="InterPro" id="IPR008343">
    <property type="entry name" value="MKP"/>
</dbReference>
<dbReference type="InterPro" id="IPR029021">
    <property type="entry name" value="Prot-tyrosine_phosphatase-like"/>
</dbReference>
<dbReference type="InterPro" id="IPR001763">
    <property type="entry name" value="Rhodanese-like_dom"/>
</dbReference>
<dbReference type="InterPro" id="IPR036873">
    <property type="entry name" value="Rhodanese-like_dom_sf"/>
</dbReference>
<dbReference type="InterPro" id="IPR016130">
    <property type="entry name" value="Tyr_Pase_AS"/>
</dbReference>
<dbReference type="InterPro" id="IPR003595">
    <property type="entry name" value="Tyr_Pase_cat"/>
</dbReference>
<dbReference type="InterPro" id="IPR000387">
    <property type="entry name" value="Tyr_Pase_dom"/>
</dbReference>
<dbReference type="InterPro" id="IPR020422">
    <property type="entry name" value="TYR_PHOSPHATASE_DUAL_dom"/>
</dbReference>
<dbReference type="PANTHER" id="PTHR10159">
    <property type="entry name" value="DUAL SPECIFICITY PROTEIN PHOSPHATASE"/>
    <property type="match status" value="1"/>
</dbReference>
<dbReference type="PANTHER" id="PTHR10159:SF309">
    <property type="entry name" value="DUAL SPECIFICITY PROTEIN PHOSPHATASE 1"/>
    <property type="match status" value="1"/>
</dbReference>
<dbReference type="Pfam" id="PF00782">
    <property type="entry name" value="DSPc"/>
    <property type="match status" value="1"/>
</dbReference>
<dbReference type="Pfam" id="PF00581">
    <property type="entry name" value="Rhodanese"/>
    <property type="match status" value="1"/>
</dbReference>
<dbReference type="PIRSF" id="PIRSF000939">
    <property type="entry name" value="MAPK_Ptase"/>
    <property type="match status" value="1"/>
</dbReference>
<dbReference type="PRINTS" id="PR01908">
    <property type="entry name" value="ADSPHPHTASE"/>
</dbReference>
<dbReference type="PRINTS" id="PR01764">
    <property type="entry name" value="MAPKPHPHTASE"/>
</dbReference>
<dbReference type="SMART" id="SM00195">
    <property type="entry name" value="DSPc"/>
    <property type="match status" value="1"/>
</dbReference>
<dbReference type="SMART" id="SM00404">
    <property type="entry name" value="PTPc_motif"/>
    <property type="match status" value="1"/>
</dbReference>
<dbReference type="SMART" id="SM00450">
    <property type="entry name" value="RHOD"/>
    <property type="match status" value="1"/>
</dbReference>
<dbReference type="SUPFAM" id="SSF52799">
    <property type="entry name" value="(Phosphotyrosine protein) phosphatases II"/>
    <property type="match status" value="1"/>
</dbReference>
<dbReference type="SUPFAM" id="SSF52821">
    <property type="entry name" value="Rhodanese/Cell cycle control phosphatase"/>
    <property type="match status" value="1"/>
</dbReference>
<dbReference type="PROSITE" id="PS50206">
    <property type="entry name" value="RHODANESE_3"/>
    <property type="match status" value="1"/>
</dbReference>
<dbReference type="PROSITE" id="PS00383">
    <property type="entry name" value="TYR_PHOSPHATASE_1"/>
    <property type="match status" value="1"/>
</dbReference>
<dbReference type="PROSITE" id="PS50056">
    <property type="entry name" value="TYR_PHOSPHATASE_2"/>
    <property type="match status" value="1"/>
</dbReference>
<dbReference type="PROSITE" id="PS50054">
    <property type="entry name" value="TYR_PHOSPHATASE_DUAL"/>
    <property type="match status" value="1"/>
</dbReference>
<evidence type="ECO:0000250" key="1">
    <source>
        <dbReference type="UniProtKB" id="P28563"/>
    </source>
</evidence>
<evidence type="ECO:0000250" key="2">
    <source>
        <dbReference type="UniProtKB" id="Q91790"/>
    </source>
</evidence>
<evidence type="ECO:0000255" key="3">
    <source>
        <dbReference type="PROSITE-ProRule" id="PRU00160"/>
    </source>
</evidence>
<evidence type="ECO:0000255" key="4">
    <source>
        <dbReference type="PROSITE-ProRule" id="PRU00173"/>
    </source>
</evidence>
<evidence type="ECO:0000255" key="5">
    <source>
        <dbReference type="PROSITE-ProRule" id="PRU10044"/>
    </source>
</evidence>
<evidence type="ECO:0000269" key="6">
    <source>
    </source>
</evidence>
<evidence type="ECO:0000269" key="7">
    <source>
    </source>
</evidence>
<evidence type="ECO:0000269" key="8">
    <source>
    </source>
</evidence>
<evidence type="ECO:0000269" key="9">
    <source ref="3"/>
</evidence>
<evidence type="ECO:0000303" key="10">
    <source>
    </source>
</evidence>
<evidence type="ECO:0000303" key="11">
    <source>
    </source>
</evidence>
<evidence type="ECO:0000305" key="12"/>
<evidence type="ECO:0000305" key="13">
    <source>
    </source>
</evidence>
<evidence type="ECO:0000312" key="14">
    <source>
        <dbReference type="HGNC" id="HGNC:3064"/>
    </source>
</evidence>
<evidence type="ECO:0007744" key="15">
    <source>
        <dbReference type="PDB" id="6APX"/>
    </source>
</evidence>
<evidence type="ECO:0007829" key="16">
    <source>
        <dbReference type="PDB" id="6D65"/>
    </source>
</evidence>
<evidence type="ECO:0007829" key="17">
    <source>
        <dbReference type="PDB" id="6D66"/>
    </source>
</evidence>
<name>DUS1_HUMAN</name>
<organism>
    <name type="scientific">Homo sapiens</name>
    <name type="common">Human</name>
    <dbReference type="NCBI Taxonomy" id="9606"/>
    <lineage>
        <taxon>Eukaryota</taxon>
        <taxon>Metazoa</taxon>
        <taxon>Chordata</taxon>
        <taxon>Craniata</taxon>
        <taxon>Vertebrata</taxon>
        <taxon>Euteleostomi</taxon>
        <taxon>Mammalia</taxon>
        <taxon>Eutheria</taxon>
        <taxon>Euarchontoglires</taxon>
        <taxon>Primates</taxon>
        <taxon>Haplorrhini</taxon>
        <taxon>Catarrhini</taxon>
        <taxon>Hominidae</taxon>
        <taxon>Homo</taxon>
    </lineage>
</organism>
<reference key="1">
    <citation type="journal article" date="1992" name="Nature">
        <title>Oxidative stress and heat shock induce a human gene encoding a protein-tyrosine phosphatase.</title>
        <authorList>
            <person name="Keyes S.M."/>
            <person name="Emslie E.A."/>
        </authorList>
    </citation>
    <scope>NUCLEOTIDE SEQUENCE [MRNA]</scope>
    <scope>CATALYTIC ACTIVITY</scope>
    <scope>INDUCTION</scope>
    <source>
        <tissue>Foreskin</tissue>
    </source>
</reference>
<reference key="2">
    <citation type="journal article" date="1994" name="J. Biol. Chem.">
        <title>Isolation and characterization of a human dual specificity protein-tyrosine phosphatase gene.</title>
        <authorList>
            <person name="Kwak S.P."/>
            <person name="Hakes D.J."/>
            <person name="Martell K.J."/>
            <person name="Dixon J.E."/>
        </authorList>
    </citation>
    <scope>NUCLEOTIDE SEQUENCE [MRNA]</scope>
    <scope>TISSUE SPECIFICITY</scope>
</reference>
<reference key="3">
    <citation type="submission" date="2005-11" db="EMBL/GenBank/DDBJ databases">
        <authorList>
            <consortium name="NIEHS SNPs program"/>
        </authorList>
    </citation>
    <scope>NUCLEOTIDE SEQUENCE [GENOMIC DNA]</scope>
    <scope>VARIANTS THR-56 AND HIS-187</scope>
</reference>
<reference key="4">
    <citation type="submission" date="2005-09" db="EMBL/GenBank/DDBJ databases">
        <authorList>
            <person name="Mural R.J."/>
            <person name="Istrail S."/>
            <person name="Sutton G.G."/>
            <person name="Florea L."/>
            <person name="Halpern A.L."/>
            <person name="Mobarry C.M."/>
            <person name="Lippert R."/>
            <person name="Walenz B."/>
            <person name="Shatkay H."/>
            <person name="Dew I."/>
            <person name="Miller J.R."/>
            <person name="Flanigan M.J."/>
            <person name="Edwards N.J."/>
            <person name="Bolanos R."/>
            <person name="Fasulo D."/>
            <person name="Halldorsson B.V."/>
            <person name="Hannenhalli S."/>
            <person name="Turner R."/>
            <person name="Yooseph S."/>
            <person name="Lu F."/>
            <person name="Nusskern D.R."/>
            <person name="Shue B.C."/>
            <person name="Zheng X.H."/>
            <person name="Zhong F."/>
            <person name="Delcher A.L."/>
            <person name="Huson D.H."/>
            <person name="Kravitz S.A."/>
            <person name="Mouchard L."/>
            <person name="Reinert K."/>
            <person name="Remington K.A."/>
            <person name="Clark A.G."/>
            <person name="Waterman M.S."/>
            <person name="Eichler E.E."/>
            <person name="Adams M.D."/>
            <person name="Hunkapiller M.W."/>
            <person name="Myers E.W."/>
            <person name="Venter J.C."/>
        </authorList>
    </citation>
    <scope>NUCLEOTIDE SEQUENCE [LARGE SCALE GENOMIC DNA]</scope>
</reference>
<reference key="5">
    <citation type="journal article" date="2004" name="Genome Res.">
        <title>The status, quality, and expansion of the NIH full-length cDNA project: the Mammalian Gene Collection (MGC).</title>
        <authorList>
            <consortium name="The MGC Project Team"/>
        </authorList>
    </citation>
    <scope>NUCLEOTIDE SEQUENCE [LARGE SCALE MRNA]</scope>
    <source>
        <tissue>Brain</tissue>
    </source>
</reference>
<reference key="6">
    <citation type="journal article" date="2012" name="Proc. Natl. Acad. Sci. U.S.A.">
        <title>N-terminal acetylome analyses and functional insights of the N-terminal acetyltransferase NatB.</title>
        <authorList>
            <person name="Van Damme P."/>
            <person name="Lasa M."/>
            <person name="Polevoda B."/>
            <person name="Gazquez C."/>
            <person name="Elosegui-Artola A."/>
            <person name="Kim D.S."/>
            <person name="De Juan-Pardo E."/>
            <person name="Demeyer K."/>
            <person name="Hole K."/>
            <person name="Larrea E."/>
            <person name="Timmerman E."/>
            <person name="Prieto J."/>
            <person name="Arnesen T."/>
            <person name="Sherman F."/>
            <person name="Gevaert K."/>
            <person name="Aldabe R."/>
        </authorList>
    </citation>
    <scope>IDENTIFICATION BY MASS SPECTROMETRY [LARGE SCALE ANALYSIS]</scope>
</reference>
<reference key="7">
    <citation type="journal article" date="2024" name="Cells">
        <title>The E3 Ubiquitin Protein Ligase LINCR Amplifies the TLR-Mediated Signals through Direct Degradation of MKP1.</title>
        <authorList>
            <person name="Yokosawa T."/>
            <person name="Miyagawa S."/>
            <person name="Suzuki W."/>
            <person name="Nada Y."/>
            <person name="Hirata Y."/>
            <person name="Noguchi T."/>
            <person name="Matsuzawa A."/>
        </authorList>
    </citation>
    <scope>UBIQUITINATION BY NEURL3</scope>
</reference>
<reference evidence="15" key="8">
    <citation type="journal article" date="2018" name="Protein Sci.">
        <title>Crystal structure of the human dual specificity phosphatase 1 catalytic domain.</title>
        <authorList>
            <person name="Gumpena R."/>
            <person name="Lountos G.T."/>
            <person name="Raran-Kurussi S."/>
            <person name="Tropea J.E."/>
            <person name="Cherry S."/>
            <person name="Waugh D.S."/>
        </authorList>
    </citation>
    <scope>X-RAY CRYSTALLOGRAPHY (2.49 ANGSTROMS) OF 172-314 OF MUTANT SER-258</scope>
    <scope>MUTAGENESIS OF CYS-258</scope>
</reference>
<keyword id="KW-0002">3D-structure</keyword>
<keyword id="KW-0131">Cell cycle</keyword>
<keyword id="KW-0378">Hydrolase</keyword>
<keyword id="KW-0539">Nucleus</keyword>
<keyword id="KW-0597">Phosphoprotein</keyword>
<keyword id="KW-0904">Protein phosphatase</keyword>
<keyword id="KW-1267">Proteomics identification</keyword>
<keyword id="KW-1185">Reference proteome</keyword>
<keyword id="KW-0346">Stress response</keyword>
<keyword id="KW-0832">Ubl conjugation</keyword>
<sequence length="367" mass="39298">MVMEVGTLDAGGLRALLGERAAQCLLLDCRSFFAFNAGHIAGSVNVRFSTIVRRRAKGAMGLEHIVPNAELRGRLLAGAYHAVVLLDERSAALDGAKRDGTLALAAGALCREARAAQVFFLKGGYEAFSASCPELCSKQSTPMGLSLPLSTSVPDSAESGCSSCSTPLYDQGGPVEILPFLYLGSAYHASRKDMLDALGITALINVSANCPNHFEGHYQYKSIPVEDNHKADISSWFNEAIDFIDSIKNAGGRVFVHCQAGISRSATICLAYLMRTNRVKLDEAFEFVKQRRSIISPNFSFMGQLLQFESQVLAPHCSAEAGSPAMAVLDRGTSTTTVFNFPVSIPVHSTNSALSYLQSPITTSPSC</sequence>
<proteinExistence type="evidence at protein level"/>
<feature type="chain" id="PRO_0000094790" description="Dual specificity protein phosphatase 1">
    <location>
        <begin position="1"/>
        <end position="367"/>
    </location>
</feature>
<feature type="domain" description="Rhodanese" evidence="4">
    <location>
        <begin position="20"/>
        <end position="137"/>
    </location>
</feature>
<feature type="domain" description="Tyrosine-protein phosphatase" evidence="3">
    <location>
        <begin position="173"/>
        <end position="314"/>
    </location>
</feature>
<feature type="active site" description="Phosphocysteine intermediate" evidence="3">
    <location>
        <position position="258"/>
    </location>
</feature>
<feature type="modified residue" description="Phosphoserine; by MAPK1 and MAPK3" evidence="1">
    <location>
        <position position="359"/>
    </location>
</feature>
<feature type="modified residue" description="Phosphoserine; by MAPK1 and MAPK3" evidence="1">
    <location>
        <position position="364"/>
    </location>
</feature>
<feature type="sequence variant" id="VAR_025201" description="In dbSNP:rs34013988." evidence="9">
    <original>A</original>
    <variation>T</variation>
    <location>
        <position position="56"/>
    </location>
</feature>
<feature type="sequence variant" id="VAR_025202" description="In dbSNP:rs34471628." evidence="9">
    <original>Y</original>
    <variation>H</variation>
    <location>
        <position position="187"/>
    </location>
</feature>
<feature type="mutagenesis site" description="Loss of phosphatase activity." evidence="13">
    <original>C</original>
    <variation>S</variation>
    <location>
        <position position="258"/>
    </location>
</feature>
<feature type="strand" evidence="17">
    <location>
        <begin position="175"/>
        <end position="178"/>
    </location>
</feature>
<feature type="strand" evidence="17">
    <location>
        <begin position="181"/>
        <end position="184"/>
    </location>
</feature>
<feature type="helix" evidence="17">
    <location>
        <begin position="186"/>
        <end position="189"/>
    </location>
</feature>
<feature type="helix" evidence="17">
    <location>
        <begin position="192"/>
        <end position="197"/>
    </location>
</feature>
<feature type="strand" evidence="17">
    <location>
        <begin position="202"/>
        <end position="205"/>
    </location>
</feature>
<feature type="strand" evidence="17">
    <location>
        <begin position="207"/>
        <end position="209"/>
    </location>
</feature>
<feature type="turn" evidence="16">
    <location>
        <begin position="215"/>
        <end position="217"/>
    </location>
</feature>
<feature type="strand" evidence="17">
    <location>
        <begin position="218"/>
        <end position="222"/>
    </location>
</feature>
<feature type="helix" evidence="17">
    <location>
        <begin position="234"/>
        <end position="236"/>
    </location>
</feature>
<feature type="helix" evidence="17">
    <location>
        <begin position="237"/>
        <end position="249"/>
    </location>
</feature>
<feature type="strand" evidence="17">
    <location>
        <begin position="254"/>
        <end position="257"/>
    </location>
</feature>
<feature type="strand" evidence="17">
    <location>
        <begin position="259"/>
        <end position="263"/>
    </location>
</feature>
<feature type="helix" evidence="17">
    <location>
        <begin position="264"/>
        <end position="277"/>
    </location>
</feature>
<feature type="helix" evidence="17">
    <location>
        <begin position="281"/>
        <end position="291"/>
    </location>
</feature>
<feature type="helix" evidence="17">
    <location>
        <begin position="299"/>
        <end position="312"/>
    </location>
</feature>
<comment type="function">
    <text evidence="1">Dual specificity phosphatase that dephosphorylates MAP kinase MAPK1/ERK2 on both 'Thr-183' and 'Tyr-185', regulating its activity during the meiotic cell cycle.</text>
</comment>
<comment type="catalytic activity">
    <reaction evidence="5 6">
        <text>O-phospho-L-tyrosyl-[protein] + H2O = L-tyrosyl-[protein] + phosphate</text>
        <dbReference type="Rhea" id="RHEA:10684"/>
        <dbReference type="Rhea" id="RHEA-COMP:10136"/>
        <dbReference type="Rhea" id="RHEA-COMP:20101"/>
        <dbReference type="ChEBI" id="CHEBI:15377"/>
        <dbReference type="ChEBI" id="CHEBI:43474"/>
        <dbReference type="ChEBI" id="CHEBI:46858"/>
        <dbReference type="ChEBI" id="CHEBI:61978"/>
        <dbReference type="EC" id="3.1.3.48"/>
    </reaction>
</comment>
<comment type="catalytic activity">
    <reaction evidence="1">
        <text>O-phospho-L-seryl-[protein] + H2O = L-seryl-[protein] + phosphate</text>
        <dbReference type="Rhea" id="RHEA:20629"/>
        <dbReference type="Rhea" id="RHEA-COMP:9863"/>
        <dbReference type="Rhea" id="RHEA-COMP:11604"/>
        <dbReference type="ChEBI" id="CHEBI:15377"/>
        <dbReference type="ChEBI" id="CHEBI:29999"/>
        <dbReference type="ChEBI" id="CHEBI:43474"/>
        <dbReference type="ChEBI" id="CHEBI:83421"/>
        <dbReference type="EC" id="3.1.3.16"/>
    </reaction>
</comment>
<comment type="catalytic activity">
    <reaction evidence="1">
        <text>O-phospho-L-threonyl-[protein] + H2O = L-threonyl-[protein] + phosphate</text>
        <dbReference type="Rhea" id="RHEA:47004"/>
        <dbReference type="Rhea" id="RHEA-COMP:11060"/>
        <dbReference type="Rhea" id="RHEA-COMP:11605"/>
        <dbReference type="ChEBI" id="CHEBI:15377"/>
        <dbReference type="ChEBI" id="CHEBI:30013"/>
        <dbReference type="ChEBI" id="CHEBI:43474"/>
        <dbReference type="ChEBI" id="CHEBI:61977"/>
        <dbReference type="EC" id="3.1.3.16"/>
    </reaction>
</comment>
<comment type="interaction">
    <interactant intactId="EBI-975493">
        <id>P28562</id>
    </interactant>
    <interactant intactId="EBI-959949">
        <id>P28482</id>
        <label>MAPK1</label>
    </interactant>
    <organismsDiffer>false</organismsDiffer>
    <experiments>3</experiments>
</comment>
<comment type="interaction">
    <interactant intactId="EBI-975493">
        <id>P28562</id>
    </interactant>
    <interactant intactId="EBI-73946">
        <id>Q16539</id>
        <label>MAPK14</label>
    </interactant>
    <organismsDiffer>false</organismsDiffer>
    <experiments>4</experiments>
</comment>
<comment type="interaction">
    <interactant intactId="EBI-975493">
        <id>P28562</id>
    </interactant>
    <interactant intactId="EBI-73995">
        <id>P27361</id>
        <label>MAPK3</label>
    </interactant>
    <organismsDiffer>false</organismsDiffer>
    <experiments>3</experiments>
</comment>
<comment type="interaction">
    <interactant intactId="EBI-975493">
        <id>P28562</id>
    </interactant>
    <interactant intactId="EBI-456291">
        <id>Q13309</id>
        <label>SKP2</label>
    </interactant>
    <organismsDiffer>false</organismsDiffer>
    <experiments>3</experiments>
</comment>
<comment type="interaction">
    <interactant intactId="EBI-975493">
        <id>P28562</id>
    </interactant>
    <interactant intactId="EBI-413034">
        <id>P0CG47</id>
        <label>UBB</label>
    </interactant>
    <organismsDiffer>false</organismsDiffer>
    <experiments>2</experiments>
</comment>
<comment type="subcellular location">
    <subcellularLocation>
        <location evidence="2">Nucleus</location>
    </subcellularLocation>
</comment>
<comment type="tissue specificity">
    <text evidence="8">Expressed at high levels in the lung, liver placenta and pancreas. Moderate levels seen in the heart and skeletal muscle. Lower levels found in the brain and kidney.</text>
</comment>
<comment type="induction">
    <text evidence="6">By oxidative stress and heat shock.</text>
</comment>
<comment type="PTM">
    <text evidence="1">Phosphorylation at Ser-359 and Ser-364 by MAPK1/ERK2 and MAPK3/ERK1 reduces its rate of degradation.</text>
</comment>
<comment type="PTM">
    <text evidence="7">'Lys-48'-linked polyubiquitinated by NEURL3, leading to proteasomal degradation.</text>
</comment>
<comment type="similarity">
    <text evidence="12">Belongs to the protein-tyrosine phosphatase family. Non-receptor class dual specificity subfamily.</text>
</comment>
<comment type="online information" name="Atlas of Genetics and Cytogenetics in Oncology and Haematology">
    <link uri="https://atlasgeneticsoncology.org/gene/40371/DUSP1"/>
</comment>
<gene>
    <name evidence="14" type="primary">DUSP1</name>
    <name evidence="10" type="synonym">CL100</name>
    <name type="synonym">MKP1</name>
    <name evidence="14" type="synonym">PTPN10</name>
    <name evidence="11" type="synonym">VH1</name>
</gene>
<protein>
    <recommendedName>
        <fullName evidence="12">Dual specificity protein phosphatase 1</fullName>
        <ecNumber evidence="1">3.1.3.16</ecNumber>
        <ecNumber evidence="6">3.1.3.48</ecNumber>
    </recommendedName>
    <alternativeName>
        <fullName evidence="11">Dual specificity protein phosphatase hVH1</fullName>
    </alternativeName>
    <alternativeName>
        <fullName>Mitogen-activated protein kinase phosphatase 1</fullName>
        <shortName>MAP kinase phosphatase 1</shortName>
        <shortName>MKP-1</shortName>
    </alternativeName>
    <alternativeName>
        <fullName evidence="10">Protein-tyrosine phosphatase CL100</fullName>
    </alternativeName>
</protein>
<accession>P28562</accession>
<accession>D3DQL9</accession>
<accession>Q2V508</accession>